<comment type="function">
    <text evidence="1">Probable RNase involved in rRNA stability through maturation and/or degradation of precursor rRNAs. Binds to RNA in loop regions with AU-rich sequences.</text>
</comment>
<comment type="similarity">
    <text evidence="1">Belongs to the FAU-1 family.</text>
</comment>
<accession>A4WJU1</accession>
<sequence length="444" mass="48626">MYRARIRGIYATALTKLALDWGFKVVQPTEKIARRFGLEPDFSPPDITVKDHESKTGIVAMGLCEAVEAFLSKLTEYADPIVARARARLKEVFVGRAVGEATVEGPGGEVFDVPRRYVLTPGATGIYTVVRPPIGPLKGVAAPEIVVEGQYVELNTTGRVSYSEHIPAEEAVRLRILAETRLRQYASIGLRFKSSARYAPDDAIAAEAEALYKEMLEISKGGSPGQVLRRGKCFAVVLFDSASKARLDEARAAVVPTVRGHHALRAQGLGKCLDLLDHVGGDVYEKAAEFLAGEAAAVYHVKPWGEVVKMRAEPVGVRGGVLVLRRRLRPGGVLDGIGVKIERGFYALTCVPRGKGYVVHTYYTAEGKAVGTYVNANTVPEWGRRVIYIDLLVDKAFDGGGERVLDLDEYEKYAEMFPQRLRDPLSRLPKTPIWCTEEGIKTVA</sequence>
<name>FAU1_PYRAR</name>
<evidence type="ECO:0000255" key="1">
    <source>
        <dbReference type="HAMAP-Rule" id="MF_01910"/>
    </source>
</evidence>
<proteinExistence type="inferred from homology"/>
<feature type="chain" id="PRO_0000334203" description="Probable ribonuclease FAU-1">
    <location>
        <begin position="1"/>
        <end position="444"/>
    </location>
</feature>
<reference key="1">
    <citation type="submission" date="2007-04" db="EMBL/GenBank/DDBJ databases">
        <title>Complete sequence of Pyrobaculum arsenaticum DSM 13514.</title>
        <authorList>
            <consortium name="US DOE Joint Genome Institute"/>
            <person name="Copeland A."/>
            <person name="Lucas S."/>
            <person name="Lapidus A."/>
            <person name="Barry K."/>
            <person name="Glavina del Rio T."/>
            <person name="Dalin E."/>
            <person name="Tice H."/>
            <person name="Pitluck S."/>
            <person name="Chain P."/>
            <person name="Malfatti S."/>
            <person name="Shin M."/>
            <person name="Vergez L."/>
            <person name="Schmutz J."/>
            <person name="Larimer F."/>
            <person name="Land M."/>
            <person name="Hauser L."/>
            <person name="Kyrpides N."/>
            <person name="Mikhailova N."/>
            <person name="Cozen A.E."/>
            <person name="Fitz-Gibbon S.T."/>
            <person name="House C.H."/>
            <person name="Saltikov C."/>
            <person name="Lowe T.M."/>
            <person name="Richardson P."/>
        </authorList>
    </citation>
    <scope>NUCLEOTIDE SEQUENCE [LARGE SCALE GENOMIC DNA]</scope>
    <source>
        <strain>ATCC 700994 / DSM 13514 / JCM 11321 / PZ6</strain>
    </source>
</reference>
<keyword id="KW-0255">Endonuclease</keyword>
<keyword id="KW-0378">Hydrolase</keyword>
<keyword id="KW-0540">Nuclease</keyword>
<keyword id="KW-0694">RNA-binding</keyword>
<keyword id="KW-0698">rRNA processing</keyword>
<organism>
    <name type="scientific">Pyrobaculum arsenaticum (strain DSM 13514 / JCM 11321 / PZ6)</name>
    <dbReference type="NCBI Taxonomy" id="340102"/>
    <lineage>
        <taxon>Archaea</taxon>
        <taxon>Thermoproteota</taxon>
        <taxon>Thermoprotei</taxon>
        <taxon>Thermoproteales</taxon>
        <taxon>Thermoproteaceae</taxon>
        <taxon>Pyrobaculum</taxon>
    </lineage>
</organism>
<protein>
    <recommendedName>
        <fullName evidence="1">Probable ribonuclease FAU-1</fullName>
        <ecNumber evidence="1">3.1.26.-</ecNumber>
    </recommendedName>
    <alternativeName>
        <fullName evidence="1">RNA-binding protein FAU-1</fullName>
    </alternativeName>
</protein>
<gene>
    <name evidence="1" type="primary">fau-1</name>
    <name type="ordered locus">Pars_1080</name>
</gene>
<dbReference type="EC" id="3.1.26.-" evidence="1"/>
<dbReference type="EMBL" id="CP000660">
    <property type="protein sequence ID" value="ABP50658.1"/>
    <property type="molecule type" value="Genomic_DNA"/>
</dbReference>
<dbReference type="SMR" id="A4WJU1"/>
<dbReference type="STRING" id="340102.Pars_1080"/>
<dbReference type="KEGG" id="pas:Pars_1080"/>
<dbReference type="HOGENOM" id="CLU_044303_0_0_2"/>
<dbReference type="OrthoDB" id="84798at2157"/>
<dbReference type="PhylomeDB" id="A4WJU1"/>
<dbReference type="Proteomes" id="UP000001567">
    <property type="component" value="Chromosome"/>
</dbReference>
<dbReference type="GO" id="GO:0035925">
    <property type="term" value="F:mRNA 3'-UTR AU-rich region binding"/>
    <property type="evidence" value="ECO:0007669"/>
    <property type="project" value="UniProtKB-UniRule"/>
</dbReference>
<dbReference type="GO" id="GO:0016891">
    <property type="term" value="F:RNA endonuclease activity, producing 5'-phosphomonoesters"/>
    <property type="evidence" value="ECO:0007669"/>
    <property type="project" value="UniProtKB-UniRule"/>
</dbReference>
<dbReference type="GO" id="GO:0006364">
    <property type="term" value="P:rRNA processing"/>
    <property type="evidence" value="ECO:0007669"/>
    <property type="project" value="UniProtKB-UniRule"/>
</dbReference>
<dbReference type="Gene3D" id="2.40.380.10">
    <property type="entry name" value="FomD-like"/>
    <property type="match status" value="1"/>
</dbReference>
<dbReference type="HAMAP" id="MF_01910">
    <property type="entry name" value="RNA_binding_AU_1"/>
    <property type="match status" value="1"/>
</dbReference>
<dbReference type="InterPro" id="IPR007295">
    <property type="entry name" value="DUF402"/>
</dbReference>
<dbReference type="InterPro" id="IPR035930">
    <property type="entry name" value="FomD-like_sf"/>
</dbReference>
<dbReference type="InterPro" id="IPR050212">
    <property type="entry name" value="Ntdp-like"/>
</dbReference>
<dbReference type="InterPro" id="IPR016730">
    <property type="entry name" value="RNA-bd_FAU-1"/>
</dbReference>
<dbReference type="PANTHER" id="PTHR39159">
    <property type="match status" value="1"/>
</dbReference>
<dbReference type="PANTHER" id="PTHR39159:SF1">
    <property type="entry name" value="UPF0374 PROTEIN YGAC"/>
    <property type="match status" value="1"/>
</dbReference>
<dbReference type="Pfam" id="PF04167">
    <property type="entry name" value="DUF402"/>
    <property type="match status" value="1"/>
</dbReference>
<dbReference type="SUPFAM" id="SSF159234">
    <property type="entry name" value="FomD-like"/>
    <property type="match status" value="1"/>
</dbReference>